<proteinExistence type="inferred from homology"/>
<feature type="chain" id="PRO_0000320868" description="Protein translocase subunit SecA 1">
    <location>
        <begin position="1"/>
        <end position="951"/>
    </location>
</feature>
<feature type="region of interest" description="Disordered" evidence="2">
    <location>
        <begin position="911"/>
        <end position="942"/>
    </location>
</feature>
<feature type="binding site" evidence="1">
    <location>
        <position position="87"/>
    </location>
    <ligand>
        <name>ATP</name>
        <dbReference type="ChEBI" id="CHEBI:30616"/>
    </ligand>
</feature>
<feature type="binding site" evidence="1">
    <location>
        <begin position="105"/>
        <end position="109"/>
    </location>
    <ligand>
        <name>ATP</name>
        <dbReference type="ChEBI" id="CHEBI:30616"/>
    </ligand>
</feature>
<feature type="binding site" evidence="1">
    <location>
        <position position="525"/>
    </location>
    <ligand>
        <name>ATP</name>
        <dbReference type="ChEBI" id="CHEBI:30616"/>
    </ligand>
</feature>
<feature type="binding site" evidence="1">
    <location>
        <position position="937"/>
    </location>
    <ligand>
        <name>Zn(2+)</name>
        <dbReference type="ChEBI" id="CHEBI:29105"/>
    </ligand>
</feature>
<feature type="binding site" evidence="1">
    <location>
        <position position="939"/>
    </location>
    <ligand>
        <name>Zn(2+)</name>
        <dbReference type="ChEBI" id="CHEBI:29105"/>
    </ligand>
</feature>
<feature type="binding site" evidence="1">
    <location>
        <position position="948"/>
    </location>
    <ligand>
        <name>Zn(2+)</name>
        <dbReference type="ChEBI" id="CHEBI:29105"/>
    </ligand>
</feature>
<feature type="binding site" evidence="1">
    <location>
        <position position="949"/>
    </location>
    <ligand>
        <name>Zn(2+)</name>
        <dbReference type="ChEBI" id="CHEBI:29105"/>
    </ligand>
</feature>
<name>SECA1_NITHX</name>
<protein>
    <recommendedName>
        <fullName evidence="1">Protein translocase subunit SecA 1</fullName>
        <ecNumber evidence="1">7.4.2.8</ecNumber>
    </recommendedName>
</protein>
<comment type="function">
    <text evidence="1">Part of the Sec protein translocase complex. Interacts with the SecYEG preprotein conducting channel. Has a central role in coupling the hydrolysis of ATP to the transfer of proteins into and across the cell membrane, serving both as a receptor for the preprotein-SecB complex and as an ATP-driven molecular motor driving the stepwise translocation of polypeptide chains across the membrane.</text>
</comment>
<comment type="catalytic activity">
    <reaction evidence="1">
        <text>ATP + H2O + cellular proteinSide 1 = ADP + phosphate + cellular proteinSide 2.</text>
        <dbReference type="EC" id="7.4.2.8"/>
    </reaction>
</comment>
<comment type="cofactor">
    <cofactor evidence="1">
        <name>Zn(2+)</name>
        <dbReference type="ChEBI" id="CHEBI:29105"/>
    </cofactor>
    <text evidence="1">May bind 1 zinc ion per subunit.</text>
</comment>
<comment type="subunit">
    <text evidence="1">Monomer and homodimer. Part of the essential Sec protein translocation apparatus which comprises SecA, SecYEG and auxiliary proteins SecDF-YajC and YidC.</text>
</comment>
<comment type="subcellular location">
    <subcellularLocation>
        <location evidence="1">Cell inner membrane</location>
        <topology evidence="1">Peripheral membrane protein</topology>
        <orientation evidence="1">Cytoplasmic side</orientation>
    </subcellularLocation>
    <subcellularLocation>
        <location evidence="1">Cytoplasm</location>
    </subcellularLocation>
    <text evidence="1">Distribution is 50-50.</text>
</comment>
<comment type="similarity">
    <text evidence="1">Belongs to the SecA family.</text>
</comment>
<reference key="1">
    <citation type="submission" date="2006-03" db="EMBL/GenBank/DDBJ databases">
        <title>Complete sequence of chromosome of Nitrobacter hamburgensis X14.</title>
        <authorList>
            <consortium name="US DOE Joint Genome Institute"/>
            <person name="Copeland A."/>
            <person name="Lucas S."/>
            <person name="Lapidus A."/>
            <person name="Barry K."/>
            <person name="Detter J.C."/>
            <person name="Glavina del Rio T."/>
            <person name="Hammon N."/>
            <person name="Israni S."/>
            <person name="Dalin E."/>
            <person name="Tice H."/>
            <person name="Pitluck S."/>
            <person name="Chain P."/>
            <person name="Malfatti S."/>
            <person name="Shin M."/>
            <person name="Vergez L."/>
            <person name="Schmutz J."/>
            <person name="Larimer F."/>
            <person name="Land M."/>
            <person name="Hauser L."/>
            <person name="Kyrpides N."/>
            <person name="Ivanova N."/>
            <person name="Ward B."/>
            <person name="Arp D."/>
            <person name="Klotz M."/>
            <person name="Stein L."/>
            <person name="O'Mullan G."/>
            <person name="Starkenburg S."/>
            <person name="Sayavedra L."/>
            <person name="Poret-Peterson A.T."/>
            <person name="Gentry M.E."/>
            <person name="Bruce D."/>
            <person name="Richardson P."/>
        </authorList>
    </citation>
    <scope>NUCLEOTIDE SEQUENCE [LARGE SCALE GENOMIC DNA]</scope>
    <source>
        <strain>DSM 10229 / NCIMB 13809 / X14</strain>
    </source>
</reference>
<dbReference type="EC" id="7.4.2.8" evidence="1"/>
<dbReference type="EMBL" id="CP000319">
    <property type="protein sequence ID" value="ABE61375.1"/>
    <property type="molecule type" value="Genomic_DNA"/>
</dbReference>
<dbReference type="RefSeq" id="WP_011509079.1">
    <property type="nucleotide sequence ID" value="NC_007964.1"/>
</dbReference>
<dbReference type="SMR" id="Q1QQX2"/>
<dbReference type="STRING" id="323097.Nham_0485"/>
<dbReference type="KEGG" id="nha:Nham_0485"/>
<dbReference type="eggNOG" id="COG0653">
    <property type="taxonomic scope" value="Bacteria"/>
</dbReference>
<dbReference type="HOGENOM" id="CLU_005314_3_0_5"/>
<dbReference type="OrthoDB" id="9805579at2"/>
<dbReference type="Proteomes" id="UP000001953">
    <property type="component" value="Chromosome"/>
</dbReference>
<dbReference type="GO" id="GO:0031522">
    <property type="term" value="C:cell envelope Sec protein transport complex"/>
    <property type="evidence" value="ECO:0007669"/>
    <property type="project" value="TreeGrafter"/>
</dbReference>
<dbReference type="GO" id="GO:0005829">
    <property type="term" value="C:cytosol"/>
    <property type="evidence" value="ECO:0007669"/>
    <property type="project" value="TreeGrafter"/>
</dbReference>
<dbReference type="GO" id="GO:0005886">
    <property type="term" value="C:plasma membrane"/>
    <property type="evidence" value="ECO:0007669"/>
    <property type="project" value="UniProtKB-SubCell"/>
</dbReference>
<dbReference type="GO" id="GO:0005524">
    <property type="term" value="F:ATP binding"/>
    <property type="evidence" value="ECO:0007669"/>
    <property type="project" value="UniProtKB-UniRule"/>
</dbReference>
<dbReference type="GO" id="GO:0046872">
    <property type="term" value="F:metal ion binding"/>
    <property type="evidence" value="ECO:0007669"/>
    <property type="project" value="UniProtKB-KW"/>
</dbReference>
<dbReference type="GO" id="GO:0008564">
    <property type="term" value="F:protein-exporting ATPase activity"/>
    <property type="evidence" value="ECO:0007669"/>
    <property type="project" value="UniProtKB-EC"/>
</dbReference>
<dbReference type="GO" id="GO:0065002">
    <property type="term" value="P:intracellular protein transmembrane transport"/>
    <property type="evidence" value="ECO:0007669"/>
    <property type="project" value="UniProtKB-UniRule"/>
</dbReference>
<dbReference type="GO" id="GO:0017038">
    <property type="term" value="P:protein import"/>
    <property type="evidence" value="ECO:0007669"/>
    <property type="project" value="InterPro"/>
</dbReference>
<dbReference type="GO" id="GO:0006605">
    <property type="term" value="P:protein targeting"/>
    <property type="evidence" value="ECO:0007669"/>
    <property type="project" value="UniProtKB-UniRule"/>
</dbReference>
<dbReference type="GO" id="GO:0043952">
    <property type="term" value="P:protein transport by the Sec complex"/>
    <property type="evidence" value="ECO:0007669"/>
    <property type="project" value="TreeGrafter"/>
</dbReference>
<dbReference type="CDD" id="cd17928">
    <property type="entry name" value="DEXDc_SecA"/>
    <property type="match status" value="1"/>
</dbReference>
<dbReference type="CDD" id="cd18803">
    <property type="entry name" value="SF2_C_secA"/>
    <property type="match status" value="1"/>
</dbReference>
<dbReference type="FunFam" id="3.90.1440.10:FF:000001">
    <property type="entry name" value="Preprotein translocase subunit SecA"/>
    <property type="match status" value="1"/>
</dbReference>
<dbReference type="FunFam" id="1.10.3060.10:FF:000003">
    <property type="entry name" value="Protein translocase subunit SecA"/>
    <property type="match status" value="1"/>
</dbReference>
<dbReference type="FunFam" id="3.40.50.300:FF:000334">
    <property type="entry name" value="Protein translocase subunit SecA"/>
    <property type="match status" value="1"/>
</dbReference>
<dbReference type="FunFam" id="3.40.50.300:FF:001790">
    <property type="entry name" value="Protein translocase subunit SecA"/>
    <property type="match status" value="1"/>
</dbReference>
<dbReference type="Gene3D" id="1.10.3060.10">
    <property type="entry name" value="Helical scaffold and wing domains of SecA"/>
    <property type="match status" value="1"/>
</dbReference>
<dbReference type="Gene3D" id="3.40.50.300">
    <property type="entry name" value="P-loop containing nucleotide triphosphate hydrolases"/>
    <property type="match status" value="2"/>
</dbReference>
<dbReference type="Gene3D" id="3.90.1440.10">
    <property type="entry name" value="SecA, preprotein cross-linking domain"/>
    <property type="match status" value="1"/>
</dbReference>
<dbReference type="HAMAP" id="MF_01382">
    <property type="entry name" value="SecA"/>
    <property type="match status" value="1"/>
</dbReference>
<dbReference type="InterPro" id="IPR014001">
    <property type="entry name" value="Helicase_ATP-bd"/>
</dbReference>
<dbReference type="InterPro" id="IPR027417">
    <property type="entry name" value="P-loop_NTPase"/>
</dbReference>
<dbReference type="InterPro" id="IPR004027">
    <property type="entry name" value="SEC_C_motif"/>
</dbReference>
<dbReference type="InterPro" id="IPR000185">
    <property type="entry name" value="SecA"/>
</dbReference>
<dbReference type="InterPro" id="IPR020937">
    <property type="entry name" value="SecA_CS"/>
</dbReference>
<dbReference type="InterPro" id="IPR011115">
    <property type="entry name" value="SecA_DEAD"/>
</dbReference>
<dbReference type="InterPro" id="IPR014018">
    <property type="entry name" value="SecA_motor_DEAD"/>
</dbReference>
<dbReference type="InterPro" id="IPR011130">
    <property type="entry name" value="SecA_preprotein_X-link_dom"/>
</dbReference>
<dbReference type="InterPro" id="IPR044722">
    <property type="entry name" value="SecA_SF2_C"/>
</dbReference>
<dbReference type="InterPro" id="IPR011116">
    <property type="entry name" value="SecA_Wing/Scaffold"/>
</dbReference>
<dbReference type="InterPro" id="IPR036266">
    <property type="entry name" value="SecA_Wing/Scaffold_sf"/>
</dbReference>
<dbReference type="InterPro" id="IPR036670">
    <property type="entry name" value="SecA_X-link_sf"/>
</dbReference>
<dbReference type="NCBIfam" id="NF009538">
    <property type="entry name" value="PRK12904.1"/>
    <property type="match status" value="1"/>
</dbReference>
<dbReference type="NCBIfam" id="TIGR00963">
    <property type="entry name" value="secA"/>
    <property type="match status" value="1"/>
</dbReference>
<dbReference type="PANTHER" id="PTHR30612:SF0">
    <property type="entry name" value="CHLOROPLAST PROTEIN-TRANSPORTING ATPASE"/>
    <property type="match status" value="1"/>
</dbReference>
<dbReference type="PANTHER" id="PTHR30612">
    <property type="entry name" value="SECA INNER MEMBRANE COMPONENT OF SEC PROTEIN SECRETION SYSTEM"/>
    <property type="match status" value="1"/>
</dbReference>
<dbReference type="Pfam" id="PF21090">
    <property type="entry name" value="P-loop_SecA"/>
    <property type="match status" value="1"/>
</dbReference>
<dbReference type="Pfam" id="PF02810">
    <property type="entry name" value="SEC-C"/>
    <property type="match status" value="1"/>
</dbReference>
<dbReference type="Pfam" id="PF07517">
    <property type="entry name" value="SecA_DEAD"/>
    <property type="match status" value="1"/>
</dbReference>
<dbReference type="Pfam" id="PF01043">
    <property type="entry name" value="SecA_PP_bind"/>
    <property type="match status" value="1"/>
</dbReference>
<dbReference type="Pfam" id="PF07516">
    <property type="entry name" value="SecA_SW"/>
    <property type="match status" value="1"/>
</dbReference>
<dbReference type="PRINTS" id="PR00906">
    <property type="entry name" value="SECA"/>
</dbReference>
<dbReference type="SMART" id="SM00957">
    <property type="entry name" value="SecA_DEAD"/>
    <property type="match status" value="1"/>
</dbReference>
<dbReference type="SMART" id="SM00958">
    <property type="entry name" value="SecA_PP_bind"/>
    <property type="match status" value="1"/>
</dbReference>
<dbReference type="SUPFAM" id="SSF81886">
    <property type="entry name" value="Helical scaffold and wing domains of SecA"/>
    <property type="match status" value="1"/>
</dbReference>
<dbReference type="SUPFAM" id="SSF52540">
    <property type="entry name" value="P-loop containing nucleoside triphosphate hydrolases"/>
    <property type="match status" value="2"/>
</dbReference>
<dbReference type="SUPFAM" id="SSF81767">
    <property type="entry name" value="Pre-protein crosslinking domain of SecA"/>
    <property type="match status" value="1"/>
</dbReference>
<dbReference type="PROSITE" id="PS01312">
    <property type="entry name" value="SECA"/>
    <property type="match status" value="1"/>
</dbReference>
<dbReference type="PROSITE" id="PS51196">
    <property type="entry name" value="SECA_MOTOR_DEAD"/>
    <property type="match status" value="1"/>
</dbReference>
<accession>Q1QQX2</accession>
<gene>
    <name evidence="1" type="primary">secA1</name>
    <name type="ordered locus">Nham_0485</name>
</gene>
<keyword id="KW-0067">ATP-binding</keyword>
<keyword id="KW-0997">Cell inner membrane</keyword>
<keyword id="KW-1003">Cell membrane</keyword>
<keyword id="KW-0963">Cytoplasm</keyword>
<keyword id="KW-0472">Membrane</keyword>
<keyword id="KW-0479">Metal-binding</keyword>
<keyword id="KW-0547">Nucleotide-binding</keyword>
<keyword id="KW-0653">Protein transport</keyword>
<keyword id="KW-1185">Reference proteome</keyword>
<keyword id="KW-1278">Translocase</keyword>
<keyword id="KW-0811">Translocation</keyword>
<keyword id="KW-0813">Transport</keyword>
<keyword id="KW-0862">Zinc</keyword>
<evidence type="ECO:0000255" key="1">
    <source>
        <dbReference type="HAMAP-Rule" id="MF_01382"/>
    </source>
</evidence>
<evidence type="ECO:0000256" key="2">
    <source>
        <dbReference type="SAM" id="MobiDB-lite"/>
    </source>
</evidence>
<organism>
    <name type="scientific">Nitrobacter hamburgensis (strain DSM 10229 / NCIMB 13809 / X14)</name>
    <dbReference type="NCBI Taxonomy" id="323097"/>
    <lineage>
        <taxon>Bacteria</taxon>
        <taxon>Pseudomonadati</taxon>
        <taxon>Pseudomonadota</taxon>
        <taxon>Alphaproteobacteria</taxon>
        <taxon>Hyphomicrobiales</taxon>
        <taxon>Nitrobacteraceae</taxon>
        <taxon>Nitrobacter</taxon>
    </lineage>
</organism>
<sequence>MIGALARKFFGSANDRRVKGYQARVKAINGLEPEIAALSDEALRARTAEFRQQLADGKTLDDILVPAFATVREAGKRTLGQRHFDVQLIGGMVLHEGDIAEMKTGEGKTLVATLAVYLNALAGKGVHVVTVNDYLASRDAGWMAQIYTFLGLTTGVIVHGLDDVERKAAYACDITYGTNNEYGFDYLRDNMKYRLEDMVQREHFYAIVDEVDSILIDEARTPLIISGPLDDRSEFYNTIDTFMPNLEKVADYEVDEKQRTVALTEAGMEKIETLLRDAGQLKGDSLYDVENVSVVHHINQALRAHSLFTRDKDYIVRDDEVVIIDEFTGRMMQGRRYSEGLHQALEAKEHVTVQPENQTLASITFQNYFRMYKKLSGMTGTALTEADELADIYKLEVVEIPTNLPIARLDEDDEVYRTQNEKYAAILAEVERANARMQPVLVGTASIEKSEVLADYLKKNGYKLIDFGDPKSMRKLYAAARAGKPAKLFAVLNARFHEQEAYIVAEAGVPGAITIATNMAGRGTDIKLGGSLEMRAQFETADLADEAEKDAKIAEIKADIERFRDMVLKAEDVVEIEPAKGSKPAKTVTRPGGLYIIGSERHESRRIDNQLRGRSGRQGDPGRSKFFLSLEDDLMRIFGSDRLDTMLQRLGLKDGEAITHPWINKALEKAQQKVEARNFDIRKNLLKYDDVQNDQRKVIFDQRVDLMMNESVAETVADMRHAFVDDLVTKHVPENQYAEQWDVAGLKEELRRVLDIDLPVDEWAAEEGIADEELLSRIENRVDEHMAAKVGQWGPDVMRYVEKTILLQTLDHLWREHLVMLDHLRQVIGLRGYGQRDPLQEYKSEAFSLFEALIAHLREAVTGQLMRVEIVPPEEEQPVLPAMEVHKLDPHTGEDEMAFAQGNFAQASLAPVVSADRSSRDPGNPASWGKVGRNEDCPCGSGKKYKHCHGR</sequence>